<comment type="function">
    <text evidence="1">Catalyzes the synthesis of 5,6-dihydrouridine (D), a modified base found in the D-loop of most tRNAs, via the reduction of the C5-C6 double bond in target uridines. Specifically modifies U20 and U20a in tRNAs.</text>
</comment>
<comment type="catalytic activity">
    <reaction evidence="1">
        <text>5,6-dihydrouridine(20) in tRNA + NADP(+) = uridine(20) in tRNA + NADPH + H(+)</text>
        <dbReference type="Rhea" id="RHEA:53336"/>
        <dbReference type="Rhea" id="RHEA-COMP:13533"/>
        <dbReference type="Rhea" id="RHEA-COMP:13534"/>
        <dbReference type="ChEBI" id="CHEBI:15378"/>
        <dbReference type="ChEBI" id="CHEBI:57783"/>
        <dbReference type="ChEBI" id="CHEBI:58349"/>
        <dbReference type="ChEBI" id="CHEBI:65315"/>
        <dbReference type="ChEBI" id="CHEBI:74443"/>
        <dbReference type="EC" id="1.3.1.91"/>
    </reaction>
</comment>
<comment type="catalytic activity">
    <reaction evidence="1">
        <text>5,6-dihydrouridine(20) in tRNA + NAD(+) = uridine(20) in tRNA + NADH + H(+)</text>
        <dbReference type="Rhea" id="RHEA:53340"/>
        <dbReference type="Rhea" id="RHEA-COMP:13533"/>
        <dbReference type="Rhea" id="RHEA-COMP:13534"/>
        <dbReference type="ChEBI" id="CHEBI:15378"/>
        <dbReference type="ChEBI" id="CHEBI:57540"/>
        <dbReference type="ChEBI" id="CHEBI:57945"/>
        <dbReference type="ChEBI" id="CHEBI:65315"/>
        <dbReference type="ChEBI" id="CHEBI:74443"/>
        <dbReference type="EC" id="1.3.1.91"/>
    </reaction>
</comment>
<comment type="catalytic activity">
    <reaction evidence="1">
        <text>5,6-dihydrouridine(20a) in tRNA + NADP(+) = uridine(20a) in tRNA + NADPH + H(+)</text>
        <dbReference type="Rhea" id="RHEA:53344"/>
        <dbReference type="Rhea" id="RHEA-COMP:13535"/>
        <dbReference type="Rhea" id="RHEA-COMP:13536"/>
        <dbReference type="ChEBI" id="CHEBI:15378"/>
        <dbReference type="ChEBI" id="CHEBI:57783"/>
        <dbReference type="ChEBI" id="CHEBI:58349"/>
        <dbReference type="ChEBI" id="CHEBI:65315"/>
        <dbReference type="ChEBI" id="CHEBI:74443"/>
    </reaction>
</comment>
<comment type="catalytic activity">
    <reaction evidence="1">
        <text>5,6-dihydrouridine(20a) in tRNA + NAD(+) = uridine(20a) in tRNA + NADH + H(+)</text>
        <dbReference type="Rhea" id="RHEA:53348"/>
        <dbReference type="Rhea" id="RHEA-COMP:13535"/>
        <dbReference type="Rhea" id="RHEA-COMP:13536"/>
        <dbReference type="ChEBI" id="CHEBI:15378"/>
        <dbReference type="ChEBI" id="CHEBI:57540"/>
        <dbReference type="ChEBI" id="CHEBI:57945"/>
        <dbReference type="ChEBI" id="CHEBI:65315"/>
        <dbReference type="ChEBI" id="CHEBI:74443"/>
    </reaction>
</comment>
<comment type="cofactor">
    <cofactor evidence="1">
        <name>FMN</name>
        <dbReference type="ChEBI" id="CHEBI:58210"/>
    </cofactor>
</comment>
<comment type="similarity">
    <text evidence="1">Belongs to the Dus family. DusA subfamily.</text>
</comment>
<name>DUSAL_SYNY3</name>
<dbReference type="EC" id="1.3.1.-" evidence="1"/>
<dbReference type="EC" id="1.3.1.91" evidence="1"/>
<dbReference type="EMBL" id="BA000022">
    <property type="protein sequence ID" value="BAA16888.1"/>
    <property type="molecule type" value="Genomic_DNA"/>
</dbReference>
<dbReference type="PIR" id="S74737">
    <property type="entry name" value="S74737"/>
</dbReference>
<dbReference type="SMR" id="P72872"/>
<dbReference type="IntAct" id="P72872">
    <property type="interactions" value="1"/>
</dbReference>
<dbReference type="STRING" id="1148.gene:10497747"/>
<dbReference type="PaxDb" id="1148-1651962"/>
<dbReference type="EnsemblBacteria" id="BAA16888">
    <property type="protein sequence ID" value="BAA16888"/>
    <property type="gene ID" value="BAA16888"/>
</dbReference>
<dbReference type="KEGG" id="syn:sll0926"/>
<dbReference type="eggNOG" id="COG0042">
    <property type="taxonomic scope" value="Bacteria"/>
</dbReference>
<dbReference type="InParanoid" id="P72872"/>
<dbReference type="PhylomeDB" id="P72872"/>
<dbReference type="Proteomes" id="UP000001425">
    <property type="component" value="Chromosome"/>
</dbReference>
<dbReference type="GO" id="GO:0050660">
    <property type="term" value="F:flavin adenine dinucleotide binding"/>
    <property type="evidence" value="ECO:0007669"/>
    <property type="project" value="InterPro"/>
</dbReference>
<dbReference type="GO" id="GO:0010181">
    <property type="term" value="F:FMN binding"/>
    <property type="evidence" value="ECO:0007669"/>
    <property type="project" value="UniProtKB-UniRule"/>
</dbReference>
<dbReference type="GO" id="GO:0000049">
    <property type="term" value="F:tRNA binding"/>
    <property type="evidence" value="ECO:0007669"/>
    <property type="project" value="UniProtKB-UniRule"/>
</dbReference>
<dbReference type="GO" id="GO:0102264">
    <property type="term" value="F:tRNA-dihydrouridine20 synthase activity"/>
    <property type="evidence" value="ECO:0007669"/>
    <property type="project" value="UniProtKB-EC"/>
</dbReference>
<dbReference type="GO" id="GO:0102266">
    <property type="term" value="F:tRNA-dihydrouridine20a synthase activity"/>
    <property type="evidence" value="ECO:0007669"/>
    <property type="project" value="RHEA"/>
</dbReference>
<dbReference type="CDD" id="cd02801">
    <property type="entry name" value="DUS_like_FMN"/>
    <property type="match status" value="1"/>
</dbReference>
<dbReference type="FunFam" id="3.20.20.70:FF:000083">
    <property type="entry name" value="tRNA-dihydrouridine(20/20a) synthase"/>
    <property type="match status" value="1"/>
</dbReference>
<dbReference type="Gene3D" id="1.20.120.1460">
    <property type="match status" value="1"/>
</dbReference>
<dbReference type="Gene3D" id="3.20.20.70">
    <property type="entry name" value="Aldolase class I"/>
    <property type="match status" value="1"/>
</dbReference>
<dbReference type="HAMAP" id="MF_02041">
    <property type="entry name" value="DusA_subfam"/>
    <property type="match status" value="1"/>
</dbReference>
<dbReference type="InterPro" id="IPR013785">
    <property type="entry name" value="Aldolase_TIM"/>
</dbReference>
<dbReference type="InterPro" id="IPR035587">
    <property type="entry name" value="DUS-like_FMN-bd"/>
</dbReference>
<dbReference type="InterPro" id="IPR001269">
    <property type="entry name" value="DUS_fam"/>
</dbReference>
<dbReference type="InterPro" id="IPR004653">
    <property type="entry name" value="DusA"/>
</dbReference>
<dbReference type="InterPro" id="IPR018517">
    <property type="entry name" value="tRNA_hU_synthase_CS"/>
</dbReference>
<dbReference type="NCBIfam" id="NF008774">
    <property type="entry name" value="PRK11815.1"/>
    <property type="match status" value="1"/>
</dbReference>
<dbReference type="NCBIfam" id="TIGR00742">
    <property type="entry name" value="yjbN"/>
    <property type="match status" value="1"/>
</dbReference>
<dbReference type="PANTHER" id="PTHR42907">
    <property type="entry name" value="FMN-LINKED OXIDOREDUCTASES SUPERFAMILY PROTEIN"/>
    <property type="match status" value="1"/>
</dbReference>
<dbReference type="PANTHER" id="PTHR42907:SF1">
    <property type="entry name" value="FMN-LINKED OXIDOREDUCTASES SUPERFAMILY PROTEIN"/>
    <property type="match status" value="1"/>
</dbReference>
<dbReference type="Pfam" id="PF01207">
    <property type="entry name" value="Dus"/>
    <property type="match status" value="1"/>
</dbReference>
<dbReference type="PIRSF" id="PIRSF006621">
    <property type="entry name" value="Dus"/>
    <property type="match status" value="1"/>
</dbReference>
<dbReference type="SUPFAM" id="SSF51395">
    <property type="entry name" value="FMN-linked oxidoreductases"/>
    <property type="match status" value="1"/>
</dbReference>
<dbReference type="PROSITE" id="PS01136">
    <property type="entry name" value="UPF0034"/>
    <property type="match status" value="1"/>
</dbReference>
<evidence type="ECO:0000255" key="1">
    <source>
        <dbReference type="HAMAP-Rule" id="MF_02041"/>
    </source>
</evidence>
<proteinExistence type="inferred from homology"/>
<protein>
    <recommendedName>
        <fullName evidence="1">tRNA-dihydrouridine(20/20a) synthase</fullName>
        <ecNumber evidence="1">1.3.1.-</ecNumber>
        <ecNumber evidence="1">1.3.1.91</ecNumber>
    </recommendedName>
    <alternativeName>
        <fullName evidence="1">DusA-like U20-specific dihydrouridine synthase</fullName>
        <shortName evidence="1">U20-specific Dus</shortName>
    </alternativeName>
    <alternativeName>
        <fullName>tRNA-dihydrouridine synthase 2</fullName>
    </alternativeName>
</protein>
<gene>
    <name type="primary">dus2</name>
    <name type="ordered locus">sll0926</name>
</gene>
<sequence length="334" mass="37929">MTKIFADSSINPLSVAPMMDHTDRHFRYFLRQLTRHTLLYTEMITAQAILHGDRQRLLNFSPEEKPVALQLGGDDPQLLAECARIGQDWGYDEINLNVGCPSDRVQSGNFGACLMAQPDLVAQCVSAMQKAVEIPVTVKHRIGIDHRDSYEDLVHFVEIVANAGCQRFTVHARKAWLQGLSPKENRTIPPLRYEDVYQLKKDFPQLLIEINGGITQTEQIQQHLSHVDAVMVGRAAYENPYLFATVDRDIYHKTNLVPSRAEIIERMLPYVEERLRHGDRLNQITRHLLSLFNGQPRAKFWRRTLSDSTLLASAGPELLQTALQAQKFPGVLVA</sequence>
<accession>P72872</accession>
<organism>
    <name type="scientific">Synechocystis sp. (strain ATCC 27184 / PCC 6803 / Kazusa)</name>
    <dbReference type="NCBI Taxonomy" id="1111708"/>
    <lineage>
        <taxon>Bacteria</taxon>
        <taxon>Bacillati</taxon>
        <taxon>Cyanobacteriota</taxon>
        <taxon>Cyanophyceae</taxon>
        <taxon>Synechococcales</taxon>
        <taxon>Merismopediaceae</taxon>
        <taxon>Synechocystis</taxon>
    </lineage>
</organism>
<keyword id="KW-0285">Flavoprotein</keyword>
<keyword id="KW-0288">FMN</keyword>
<keyword id="KW-0521">NADP</keyword>
<keyword id="KW-0560">Oxidoreductase</keyword>
<keyword id="KW-1185">Reference proteome</keyword>
<keyword id="KW-0694">RNA-binding</keyword>
<keyword id="KW-0819">tRNA processing</keyword>
<keyword id="KW-0820">tRNA-binding</keyword>
<feature type="chain" id="PRO_0000162151" description="tRNA-dihydrouridine(20/20a) synthase">
    <location>
        <begin position="1"/>
        <end position="334"/>
    </location>
</feature>
<feature type="active site" description="Proton donor" evidence="1">
    <location>
        <position position="100"/>
    </location>
</feature>
<feature type="binding site" evidence="1">
    <location>
        <begin position="17"/>
        <end position="19"/>
    </location>
    <ligand>
        <name>FMN</name>
        <dbReference type="ChEBI" id="CHEBI:58210"/>
    </ligand>
</feature>
<feature type="binding site" evidence="1">
    <location>
        <position position="70"/>
    </location>
    <ligand>
        <name>FMN</name>
        <dbReference type="ChEBI" id="CHEBI:58210"/>
    </ligand>
</feature>
<feature type="binding site" evidence="1">
    <location>
        <position position="139"/>
    </location>
    <ligand>
        <name>FMN</name>
        <dbReference type="ChEBI" id="CHEBI:58210"/>
    </ligand>
</feature>
<feature type="binding site" evidence="1">
    <location>
        <position position="171"/>
    </location>
    <ligand>
        <name>FMN</name>
        <dbReference type="ChEBI" id="CHEBI:58210"/>
    </ligand>
</feature>
<feature type="binding site" evidence="1">
    <location>
        <begin position="211"/>
        <end position="213"/>
    </location>
    <ligand>
        <name>FMN</name>
        <dbReference type="ChEBI" id="CHEBI:58210"/>
    </ligand>
</feature>
<feature type="binding site" evidence="1">
    <location>
        <begin position="233"/>
        <end position="234"/>
    </location>
    <ligand>
        <name>FMN</name>
        <dbReference type="ChEBI" id="CHEBI:58210"/>
    </ligand>
</feature>
<feature type="site" description="Interacts with tRNA" evidence="1">
    <location>
        <position position="97"/>
    </location>
</feature>
<feature type="site" description="Interacts with tRNA; defines subfamily-specific binding signature" evidence="1">
    <location>
        <position position="183"/>
    </location>
</feature>
<feature type="site" description="Interacts with tRNA" evidence="1">
    <location>
        <position position="186"/>
    </location>
</feature>
<feature type="site" description="Interacts with tRNA; defines subfamily-specific binding signature" evidence="1">
    <location>
        <position position="302"/>
    </location>
</feature>
<reference key="1">
    <citation type="journal article" date="1996" name="DNA Res.">
        <title>Sequence analysis of the genome of the unicellular cyanobacterium Synechocystis sp. strain PCC6803. II. Sequence determination of the entire genome and assignment of potential protein-coding regions.</title>
        <authorList>
            <person name="Kaneko T."/>
            <person name="Sato S."/>
            <person name="Kotani H."/>
            <person name="Tanaka A."/>
            <person name="Asamizu E."/>
            <person name="Nakamura Y."/>
            <person name="Miyajima N."/>
            <person name="Hirosawa M."/>
            <person name="Sugiura M."/>
            <person name="Sasamoto S."/>
            <person name="Kimura T."/>
            <person name="Hosouchi T."/>
            <person name="Matsuno A."/>
            <person name="Muraki A."/>
            <person name="Nakazaki N."/>
            <person name="Naruo K."/>
            <person name="Okumura S."/>
            <person name="Shimpo S."/>
            <person name="Takeuchi C."/>
            <person name="Wada T."/>
            <person name="Watanabe A."/>
            <person name="Yamada M."/>
            <person name="Yasuda M."/>
            <person name="Tabata S."/>
        </authorList>
    </citation>
    <scope>NUCLEOTIDE SEQUENCE [LARGE SCALE GENOMIC DNA]</scope>
    <source>
        <strain>ATCC 27184 / PCC 6803 / Kazusa</strain>
    </source>
</reference>